<comment type="function">
    <text evidence="2">Conjugation of reduced glutathione to a wide number of exogenous and endogenous hydrophobic electrophiles. Has DDT dehydrochlorinase activity.</text>
</comment>
<comment type="catalytic activity">
    <reaction evidence="2">
        <text>RX + glutathione = an S-substituted glutathione + a halide anion + H(+)</text>
        <dbReference type="Rhea" id="RHEA:16437"/>
        <dbReference type="ChEBI" id="CHEBI:15378"/>
        <dbReference type="ChEBI" id="CHEBI:16042"/>
        <dbReference type="ChEBI" id="CHEBI:17792"/>
        <dbReference type="ChEBI" id="CHEBI:57925"/>
        <dbReference type="ChEBI" id="CHEBI:90779"/>
        <dbReference type="EC" id="2.5.1.18"/>
    </reaction>
</comment>
<comment type="catalytic activity">
    <reaction evidence="2">
        <text>1,1,1-trichloro-2,2-bis(4-chlorophenyl)ethane = 1,1-dichloro-2,2-bis(4-chlorophenyl)ethylene + chloride + H(+)</text>
        <dbReference type="Rhea" id="RHEA:19217"/>
        <dbReference type="ChEBI" id="CHEBI:15378"/>
        <dbReference type="ChEBI" id="CHEBI:16130"/>
        <dbReference type="ChEBI" id="CHEBI:16598"/>
        <dbReference type="ChEBI" id="CHEBI:17996"/>
        <dbReference type="EC" id="4.5.1.1"/>
    </reaction>
</comment>
<comment type="subunit">
    <text evidence="1">Homodimer.</text>
</comment>
<comment type="alternative products">
    <event type="alternative splicing"/>
    <isoform>
        <id>Q93112-1</id>
        <name>C</name>
        <name>1-5</name>
        <sequence type="displayed"/>
    </isoform>
    <isoform>
        <id>O77462-1</id>
        <name>A</name>
        <name>1-3</name>
        <sequence type="external"/>
    </isoform>
    <isoform>
        <id>O77473-1</id>
        <name>B</name>
        <name>1-4</name>
        <sequence type="external"/>
    </isoform>
    <isoform>
        <id>Q93113-1</id>
        <name>D</name>
        <name>1-1</name>
        <name>1-6</name>
        <name>2-1</name>
        <sequence type="external"/>
    </isoform>
</comment>
<comment type="similarity">
    <text evidence="3">Belongs to the GST superfamily. Theta family.</text>
</comment>
<protein>
    <recommendedName>
        <fullName>Glutathione S-transferase 1, isoform C</fullName>
        <ecNumber>2.5.1.18</ecNumber>
        <ecNumber>4.5.1.1</ecNumber>
    </recommendedName>
    <alternativeName>
        <fullName>AgGst1-alpha</fullName>
    </alternativeName>
    <alternativeName>
        <fullName>Aggst1-5</fullName>
    </alternativeName>
    <alternativeName>
        <fullName>DDT-dehydrochlorinase</fullName>
    </alternativeName>
    <alternativeName>
        <fullName>GST class-theta</fullName>
    </alternativeName>
</protein>
<proteinExistence type="evidence at protein level"/>
<accession>Q93112</accession>
<accession>O76482</accession>
<accession>Q7PQM5</accession>
<reference key="1">
    <citation type="journal article" date="1997" name="J. Biol. Chem.">
        <title>Cloning and localization of a glutathione S-transferase class I gene from Anopheles gambiae.</title>
        <authorList>
            <person name="Ranson H."/>
            <person name="Cornel A.J."/>
            <person name="Fournier D."/>
            <person name="Vaughan A."/>
            <person name="Collins F.H."/>
            <person name="Hemingway J."/>
        </authorList>
    </citation>
    <scope>NUCLEOTIDE SEQUENCE [MRNA]</scope>
    <source>
        <strain>Zands</strain>
        <tissue>Larva</tissue>
    </source>
</reference>
<reference key="2">
    <citation type="journal article" date="1998" name="Proc. Natl. Acad. Sci. U.S.A.">
        <title>The role of alternative mRNA splicing in generating heterogeneity within the Anopheles gambiae class I glutathione S-transferase family.</title>
        <authorList>
            <person name="Ranson H."/>
            <person name="Collins F.H."/>
            <person name="Hemingway J."/>
        </authorList>
    </citation>
    <scope>NUCLEOTIDE SEQUENCE [GENOMIC DNA]</scope>
    <scope>ALTERNATIVE SPLICING</scope>
    <source>
        <strain>ZAN/U</strain>
    </source>
</reference>
<reference key="3">
    <citation type="journal article" date="2002" name="Science">
        <title>The genome sequence of the malaria mosquito Anopheles gambiae.</title>
        <authorList>
            <person name="Holt R.A."/>
            <person name="Subramanian G.M."/>
            <person name="Halpern A."/>
            <person name="Sutton G.G."/>
            <person name="Charlab R."/>
            <person name="Nusskern D.R."/>
            <person name="Wincker P."/>
            <person name="Clark A.G."/>
            <person name="Ribeiro J.M.C."/>
            <person name="Wides R."/>
            <person name="Salzberg S.L."/>
            <person name="Loftus B.J."/>
            <person name="Yandell M.D."/>
            <person name="Majoros W.H."/>
            <person name="Rusch D.B."/>
            <person name="Lai Z."/>
            <person name="Kraft C.L."/>
            <person name="Abril J.F."/>
            <person name="Anthouard V."/>
            <person name="Arensburger P."/>
            <person name="Atkinson P.W."/>
            <person name="Baden H."/>
            <person name="de Berardinis V."/>
            <person name="Baldwin D."/>
            <person name="Benes V."/>
            <person name="Biedler J."/>
            <person name="Blass C."/>
            <person name="Bolanos R."/>
            <person name="Boscus D."/>
            <person name="Barnstead M."/>
            <person name="Cai S."/>
            <person name="Center A."/>
            <person name="Chaturverdi K."/>
            <person name="Christophides G.K."/>
            <person name="Chrystal M.A.M."/>
            <person name="Clamp M."/>
            <person name="Cravchik A."/>
            <person name="Curwen V."/>
            <person name="Dana A."/>
            <person name="Delcher A."/>
            <person name="Dew I."/>
            <person name="Evans C.A."/>
            <person name="Flanigan M."/>
            <person name="Grundschober-Freimoser A."/>
            <person name="Friedli L."/>
            <person name="Gu Z."/>
            <person name="Guan P."/>
            <person name="Guigo R."/>
            <person name="Hillenmeyer M.E."/>
            <person name="Hladun S.L."/>
            <person name="Hogan J.R."/>
            <person name="Hong Y.S."/>
            <person name="Hoover J."/>
            <person name="Jaillon O."/>
            <person name="Ke Z."/>
            <person name="Kodira C.D."/>
            <person name="Kokoza E."/>
            <person name="Koutsos A."/>
            <person name="Letunic I."/>
            <person name="Levitsky A.A."/>
            <person name="Liang Y."/>
            <person name="Lin J.-J."/>
            <person name="Lobo N.F."/>
            <person name="Lopez J.R."/>
            <person name="Malek J.A."/>
            <person name="McIntosh T.C."/>
            <person name="Meister S."/>
            <person name="Miller J.R."/>
            <person name="Mobarry C."/>
            <person name="Mongin E."/>
            <person name="Murphy S.D."/>
            <person name="O'Brochta D.A."/>
            <person name="Pfannkoch C."/>
            <person name="Qi R."/>
            <person name="Regier M.A."/>
            <person name="Remington K."/>
            <person name="Shao H."/>
            <person name="Sharakhova M.V."/>
            <person name="Sitter C.D."/>
            <person name="Shetty J."/>
            <person name="Smith T.J."/>
            <person name="Strong R."/>
            <person name="Sun J."/>
            <person name="Thomasova D."/>
            <person name="Ton L.Q."/>
            <person name="Topalis P."/>
            <person name="Tu Z.J."/>
            <person name="Unger M.F."/>
            <person name="Walenz B."/>
            <person name="Wang A.H."/>
            <person name="Wang J."/>
            <person name="Wang M."/>
            <person name="Wang X."/>
            <person name="Woodford K.J."/>
            <person name="Wortman J.R."/>
            <person name="Wu M."/>
            <person name="Yao A."/>
            <person name="Zdobnov E.M."/>
            <person name="Zhang H."/>
            <person name="Zhao Q."/>
            <person name="Zhao S."/>
            <person name="Zhu S.C."/>
            <person name="Zhimulev I."/>
            <person name="Coluzzi M."/>
            <person name="della Torre A."/>
            <person name="Roth C.W."/>
            <person name="Louis C."/>
            <person name="Kalush F."/>
            <person name="Mural R.J."/>
            <person name="Myers E.W."/>
            <person name="Adams M.D."/>
            <person name="Smith H.O."/>
            <person name="Broder S."/>
            <person name="Gardner M.J."/>
            <person name="Fraser C.M."/>
            <person name="Birney E."/>
            <person name="Bork P."/>
            <person name="Brey P.T."/>
            <person name="Venter J.C."/>
            <person name="Weissenbach J."/>
            <person name="Kafatos F.C."/>
            <person name="Collins F.H."/>
            <person name="Hoffman S.L."/>
        </authorList>
    </citation>
    <scope>NUCLEOTIDE SEQUENCE [LARGE SCALE GENOMIC DNA]</scope>
    <source>
        <strain>PEST</strain>
    </source>
</reference>
<reference key="4">
    <citation type="journal article" date="1997" name="Biochem. J.">
        <title>Cloning and characterization of two glutathione S-transferases from a DDT-resistant strain of Anopheles gambiae.</title>
        <authorList>
            <person name="Ranson H."/>
            <person name="Prapanthadara L."/>
            <person name="Hemingway J."/>
        </authorList>
    </citation>
    <scope>FUNCTION</scope>
    <scope>CATALYTIC ACTIVITY</scope>
    <source>
        <strain>Zands</strain>
    </source>
</reference>
<gene>
    <name type="primary">GstD1</name>
    <name type="synonym">GST1a</name>
    <name type="ORF">AGAP004164</name>
</gene>
<sequence>MDFYYLPGSAPCRAVQMTAAAVGVELNLKLTDLMKGEHMKPEFLKINPQHCIPTLVDNGFALWESRAICTYLAEKYGKDDKLYPKDPQKRAVVNQRMYFDMGTLYQRFADYYYPQIFAKQPANPENEQKMKDAVGFLNSFLDGHKYVAGDSLTIADLSILATISTYDVAGFDLAKYQHVAAWYENIRKEAPGAAINQAGIEEFKKYFEK</sequence>
<evidence type="ECO:0000250" key="1"/>
<evidence type="ECO:0000269" key="2">
    <source>
    </source>
</evidence>
<evidence type="ECO:0000305" key="3"/>
<keyword id="KW-0025">Alternative splicing</keyword>
<keyword id="KW-0456">Lyase</keyword>
<keyword id="KW-1185">Reference proteome</keyword>
<keyword id="KW-0808">Transferase</keyword>
<dbReference type="EC" id="2.5.1.18"/>
<dbReference type="EC" id="4.5.1.1"/>
<dbReference type="EMBL" id="Z81291">
    <property type="protein sequence ID" value="CAB03592.1"/>
    <property type="molecule type" value="mRNA"/>
</dbReference>
<dbReference type="EMBL" id="AF071160">
    <property type="protein sequence ID" value="AAC79993.1"/>
    <property type="molecule type" value="Genomic_DNA"/>
</dbReference>
<dbReference type="EMBL" id="AAAB01008880">
    <property type="protein sequence ID" value="EAA08605.2"/>
    <property type="molecule type" value="Genomic_DNA"/>
</dbReference>
<dbReference type="RefSeq" id="XP_313049.1">
    <molecule id="Q93112-1"/>
    <property type="nucleotide sequence ID" value="XM_313049.4"/>
</dbReference>
<dbReference type="SMR" id="Q93112"/>
<dbReference type="FunCoup" id="Q93112">
    <property type="interactions" value="627"/>
</dbReference>
<dbReference type="STRING" id="7165.Q93112"/>
<dbReference type="EnsemblMetazoa" id="AGAP004164-RA">
    <molecule id="Q93112-1"/>
    <property type="protein sequence ID" value="AGAP004164-PA"/>
    <property type="gene ID" value="AGAP004164"/>
</dbReference>
<dbReference type="GeneID" id="1273988"/>
<dbReference type="VEuPathDB" id="VectorBase:AGAMI1_006046"/>
<dbReference type="VEuPathDB" id="VectorBase:AGAP004164"/>
<dbReference type="InParanoid" id="Q93112"/>
<dbReference type="OMA" id="CPQRVMV"/>
<dbReference type="OrthoDB" id="37920at2759"/>
<dbReference type="Proteomes" id="UP000007062">
    <property type="component" value="Chromosome 2R"/>
</dbReference>
<dbReference type="GO" id="GO:0018833">
    <property type="term" value="F:DDT-dehydrochlorinase activity"/>
    <property type="evidence" value="ECO:0007669"/>
    <property type="project" value="UniProtKB-EC"/>
</dbReference>
<dbReference type="GO" id="GO:0004364">
    <property type="term" value="F:glutathione transferase activity"/>
    <property type="evidence" value="ECO:0007669"/>
    <property type="project" value="UniProtKB-EC"/>
</dbReference>
<dbReference type="CDD" id="cd03177">
    <property type="entry name" value="GST_C_Delta_Epsilon"/>
    <property type="match status" value="1"/>
</dbReference>
<dbReference type="CDD" id="cd03045">
    <property type="entry name" value="GST_N_Delta_Epsilon"/>
    <property type="match status" value="1"/>
</dbReference>
<dbReference type="FunFam" id="3.40.30.10:FF:000034">
    <property type="entry name" value="glutathione S-transferase 1"/>
    <property type="match status" value="1"/>
</dbReference>
<dbReference type="FunFam" id="1.20.1050.10:FF:000007">
    <property type="entry name" value="Glutathione S-transferase 1-1"/>
    <property type="match status" value="1"/>
</dbReference>
<dbReference type="Gene3D" id="1.20.1050.10">
    <property type="match status" value="1"/>
</dbReference>
<dbReference type="Gene3D" id="3.40.30.10">
    <property type="entry name" value="Glutaredoxin"/>
    <property type="match status" value="1"/>
</dbReference>
<dbReference type="InterPro" id="IPR010987">
    <property type="entry name" value="Glutathione-S-Trfase_C-like"/>
</dbReference>
<dbReference type="InterPro" id="IPR036282">
    <property type="entry name" value="Glutathione-S-Trfase_C_sf"/>
</dbReference>
<dbReference type="InterPro" id="IPR040079">
    <property type="entry name" value="Glutathione_S-Trfase"/>
</dbReference>
<dbReference type="InterPro" id="IPR004045">
    <property type="entry name" value="Glutathione_S-Trfase_N"/>
</dbReference>
<dbReference type="InterPro" id="IPR004046">
    <property type="entry name" value="GST_C"/>
</dbReference>
<dbReference type="InterPro" id="IPR036249">
    <property type="entry name" value="Thioredoxin-like_sf"/>
</dbReference>
<dbReference type="PANTHER" id="PTHR43969">
    <property type="entry name" value="GLUTATHIONE S TRANSFERASE D10, ISOFORM A-RELATED"/>
    <property type="match status" value="1"/>
</dbReference>
<dbReference type="PANTHER" id="PTHR43969:SF9">
    <property type="entry name" value="GLUTATHIONE S TRANSFERASE D10, ISOFORM A-RELATED"/>
    <property type="match status" value="1"/>
</dbReference>
<dbReference type="Pfam" id="PF00043">
    <property type="entry name" value="GST_C"/>
    <property type="match status" value="1"/>
</dbReference>
<dbReference type="Pfam" id="PF02798">
    <property type="entry name" value="GST_N"/>
    <property type="match status" value="1"/>
</dbReference>
<dbReference type="SFLD" id="SFLDS00019">
    <property type="entry name" value="Glutathione_Transferase_(cytos"/>
    <property type="match status" value="1"/>
</dbReference>
<dbReference type="SFLD" id="SFLDG01153">
    <property type="entry name" value="Main.4:_Theta-like"/>
    <property type="match status" value="1"/>
</dbReference>
<dbReference type="SUPFAM" id="SSF47616">
    <property type="entry name" value="GST C-terminal domain-like"/>
    <property type="match status" value="1"/>
</dbReference>
<dbReference type="SUPFAM" id="SSF52833">
    <property type="entry name" value="Thioredoxin-like"/>
    <property type="match status" value="1"/>
</dbReference>
<dbReference type="PROSITE" id="PS50405">
    <property type="entry name" value="GST_CTER"/>
    <property type="match status" value="1"/>
</dbReference>
<dbReference type="PROSITE" id="PS50404">
    <property type="entry name" value="GST_NTER"/>
    <property type="match status" value="1"/>
</dbReference>
<feature type="chain" id="PRO_0000185961" description="Glutathione S-transferase 1, isoform C">
    <location>
        <begin position="1"/>
        <end position="209"/>
    </location>
</feature>
<feature type="domain" description="GST N-terminal">
    <location>
        <begin position="1"/>
        <end position="80"/>
    </location>
</feature>
<feature type="domain" description="GST C-terminal">
    <location>
        <begin position="86"/>
        <end position="207"/>
    </location>
</feature>
<feature type="binding site" evidence="1">
    <location>
        <position position="9"/>
    </location>
    <ligand>
        <name>glutathione</name>
        <dbReference type="ChEBI" id="CHEBI:57925"/>
    </ligand>
</feature>
<feature type="binding site" evidence="1">
    <location>
        <begin position="50"/>
        <end position="52"/>
    </location>
    <ligand>
        <name>glutathione</name>
        <dbReference type="ChEBI" id="CHEBI:57925"/>
    </ligand>
</feature>
<feature type="binding site" evidence="1">
    <location>
        <begin position="64"/>
        <end position="66"/>
    </location>
    <ligand>
        <name>glutathione</name>
        <dbReference type="ChEBI" id="CHEBI:57925"/>
    </ligand>
</feature>
<feature type="sequence conflict" description="In Ref. 1; CAB03592." evidence="3" ref="1">
    <original>G</original>
    <variation>D</variation>
    <location>
        <position position="135"/>
    </location>
</feature>
<feature type="sequence conflict" description="In Ref. 1; CAB03592." evidence="3" ref="1">
    <original>S</original>
    <variation>T</variation>
    <location>
        <position position="139"/>
    </location>
</feature>
<feature type="sequence conflict" description="In Ref. 1; CAB03592." evidence="3" ref="1">
    <original>A</original>
    <variation>V</variation>
    <location>
        <position position="181"/>
    </location>
</feature>
<organism>
    <name type="scientific">Anopheles gambiae</name>
    <name type="common">African malaria mosquito</name>
    <dbReference type="NCBI Taxonomy" id="7165"/>
    <lineage>
        <taxon>Eukaryota</taxon>
        <taxon>Metazoa</taxon>
        <taxon>Ecdysozoa</taxon>
        <taxon>Arthropoda</taxon>
        <taxon>Hexapoda</taxon>
        <taxon>Insecta</taxon>
        <taxon>Pterygota</taxon>
        <taxon>Neoptera</taxon>
        <taxon>Endopterygota</taxon>
        <taxon>Diptera</taxon>
        <taxon>Nematocera</taxon>
        <taxon>Culicoidea</taxon>
        <taxon>Culicidae</taxon>
        <taxon>Anophelinae</taxon>
        <taxon>Anopheles</taxon>
    </lineage>
</organism>
<name>GST1C_ANOGA</name>